<name>TRMD_FINM2</name>
<sequence>MKFIILTLFPESFDYLKSYGVIGKAIQNNLIELEVVNIRDYTKNKHKKVDDEIYGGGAGMLMTCQPIYDCLEDVNKNQSKVVFMSPQGKVLNQQKCIELSKEKEIVILCGHYEGVDSRIINHYCDEEISIGDYVMTGGELGAMVLIDCVSRMINDVLGNDESYKTDSHYNLLLQEDSYTRPRVFNGYEVPEVLLSGNHEKIEQWREKSRLNNTKLKREDIYQKYLKEKNQGGS</sequence>
<accession>B0S047</accession>
<proteinExistence type="inferred from homology"/>
<dbReference type="EC" id="2.1.1.228" evidence="1"/>
<dbReference type="EMBL" id="AP008971">
    <property type="protein sequence ID" value="BAG07947.1"/>
    <property type="molecule type" value="Genomic_DNA"/>
</dbReference>
<dbReference type="RefSeq" id="WP_012290463.1">
    <property type="nucleotide sequence ID" value="NC_010376.1"/>
</dbReference>
<dbReference type="SMR" id="B0S047"/>
<dbReference type="STRING" id="334413.FMG_0529"/>
<dbReference type="KEGG" id="fma:FMG_0529"/>
<dbReference type="eggNOG" id="COG0336">
    <property type="taxonomic scope" value="Bacteria"/>
</dbReference>
<dbReference type="HOGENOM" id="CLU_047363_0_1_9"/>
<dbReference type="Proteomes" id="UP000001319">
    <property type="component" value="Chromosome"/>
</dbReference>
<dbReference type="GO" id="GO:0005829">
    <property type="term" value="C:cytosol"/>
    <property type="evidence" value="ECO:0007669"/>
    <property type="project" value="TreeGrafter"/>
</dbReference>
<dbReference type="GO" id="GO:0052906">
    <property type="term" value="F:tRNA (guanine(37)-N1)-methyltransferase activity"/>
    <property type="evidence" value="ECO:0007669"/>
    <property type="project" value="UniProtKB-UniRule"/>
</dbReference>
<dbReference type="GO" id="GO:0002939">
    <property type="term" value="P:tRNA N1-guanine methylation"/>
    <property type="evidence" value="ECO:0007669"/>
    <property type="project" value="TreeGrafter"/>
</dbReference>
<dbReference type="CDD" id="cd18080">
    <property type="entry name" value="TrmD-like"/>
    <property type="match status" value="1"/>
</dbReference>
<dbReference type="FunFam" id="3.40.1280.10:FF:000001">
    <property type="entry name" value="tRNA (guanine-N(1)-)-methyltransferase"/>
    <property type="match status" value="1"/>
</dbReference>
<dbReference type="Gene3D" id="3.40.1280.10">
    <property type="match status" value="1"/>
</dbReference>
<dbReference type="Gene3D" id="1.10.1270.20">
    <property type="entry name" value="tRNA(m1g37)methyltransferase, domain 2"/>
    <property type="match status" value="1"/>
</dbReference>
<dbReference type="HAMAP" id="MF_00605">
    <property type="entry name" value="TrmD"/>
    <property type="match status" value="1"/>
</dbReference>
<dbReference type="InterPro" id="IPR029028">
    <property type="entry name" value="Alpha/beta_knot_MTases"/>
</dbReference>
<dbReference type="InterPro" id="IPR023148">
    <property type="entry name" value="tRNA_m1G_MeTrfase_C_sf"/>
</dbReference>
<dbReference type="InterPro" id="IPR002649">
    <property type="entry name" value="tRNA_m1G_MeTrfase_TrmD"/>
</dbReference>
<dbReference type="InterPro" id="IPR029026">
    <property type="entry name" value="tRNA_m1G_MTases_N"/>
</dbReference>
<dbReference type="InterPro" id="IPR016009">
    <property type="entry name" value="tRNA_MeTrfase_TRMD/TRM10"/>
</dbReference>
<dbReference type="NCBIfam" id="NF000648">
    <property type="entry name" value="PRK00026.1"/>
    <property type="match status" value="1"/>
</dbReference>
<dbReference type="NCBIfam" id="TIGR00088">
    <property type="entry name" value="trmD"/>
    <property type="match status" value="1"/>
</dbReference>
<dbReference type="PANTHER" id="PTHR46417">
    <property type="entry name" value="TRNA (GUANINE-N(1)-)-METHYLTRANSFERASE"/>
    <property type="match status" value="1"/>
</dbReference>
<dbReference type="PANTHER" id="PTHR46417:SF1">
    <property type="entry name" value="TRNA (GUANINE-N(1)-)-METHYLTRANSFERASE"/>
    <property type="match status" value="1"/>
</dbReference>
<dbReference type="Pfam" id="PF01746">
    <property type="entry name" value="tRNA_m1G_MT"/>
    <property type="match status" value="1"/>
</dbReference>
<dbReference type="PIRSF" id="PIRSF000386">
    <property type="entry name" value="tRNA_mtase"/>
    <property type="match status" value="1"/>
</dbReference>
<dbReference type="SUPFAM" id="SSF75217">
    <property type="entry name" value="alpha/beta knot"/>
    <property type="match status" value="1"/>
</dbReference>
<protein>
    <recommendedName>
        <fullName evidence="1">tRNA (guanine-N(1)-)-methyltransferase</fullName>
        <ecNumber evidence="1">2.1.1.228</ecNumber>
    </recommendedName>
    <alternativeName>
        <fullName evidence="1">M1G-methyltransferase</fullName>
    </alternativeName>
    <alternativeName>
        <fullName evidence="1">tRNA [GM37] methyltransferase</fullName>
    </alternativeName>
</protein>
<comment type="function">
    <text evidence="1">Specifically methylates guanosine-37 in various tRNAs.</text>
</comment>
<comment type="catalytic activity">
    <reaction evidence="1">
        <text>guanosine(37) in tRNA + S-adenosyl-L-methionine = N(1)-methylguanosine(37) in tRNA + S-adenosyl-L-homocysteine + H(+)</text>
        <dbReference type="Rhea" id="RHEA:36899"/>
        <dbReference type="Rhea" id="RHEA-COMP:10145"/>
        <dbReference type="Rhea" id="RHEA-COMP:10147"/>
        <dbReference type="ChEBI" id="CHEBI:15378"/>
        <dbReference type="ChEBI" id="CHEBI:57856"/>
        <dbReference type="ChEBI" id="CHEBI:59789"/>
        <dbReference type="ChEBI" id="CHEBI:73542"/>
        <dbReference type="ChEBI" id="CHEBI:74269"/>
        <dbReference type="EC" id="2.1.1.228"/>
    </reaction>
</comment>
<comment type="subunit">
    <text evidence="1">Homodimer.</text>
</comment>
<comment type="subcellular location">
    <subcellularLocation>
        <location evidence="1">Cytoplasm</location>
    </subcellularLocation>
</comment>
<comment type="similarity">
    <text evidence="1">Belongs to the RNA methyltransferase TrmD family.</text>
</comment>
<feature type="chain" id="PRO_1000130173" description="tRNA (guanine-N(1)-)-methyltransferase">
    <location>
        <begin position="1"/>
        <end position="233"/>
    </location>
</feature>
<feature type="binding site" evidence="1">
    <location>
        <position position="110"/>
    </location>
    <ligand>
        <name>S-adenosyl-L-methionine</name>
        <dbReference type="ChEBI" id="CHEBI:59789"/>
    </ligand>
</feature>
<feature type="binding site" evidence="1">
    <location>
        <begin position="130"/>
        <end position="135"/>
    </location>
    <ligand>
        <name>S-adenosyl-L-methionine</name>
        <dbReference type="ChEBI" id="CHEBI:59789"/>
    </ligand>
</feature>
<evidence type="ECO:0000255" key="1">
    <source>
        <dbReference type="HAMAP-Rule" id="MF_00605"/>
    </source>
</evidence>
<reference key="1">
    <citation type="journal article" date="2008" name="DNA Res.">
        <title>Complete genome sequence of Finegoldia magna, an anaerobic opportunistic pathogen.</title>
        <authorList>
            <person name="Goto T."/>
            <person name="Yamashita A."/>
            <person name="Hirakawa H."/>
            <person name="Matsutani M."/>
            <person name="Todo K."/>
            <person name="Ohshima K."/>
            <person name="Toh H."/>
            <person name="Miyamoto K."/>
            <person name="Kuhara S."/>
            <person name="Hattori M."/>
            <person name="Shimizu T."/>
            <person name="Akimoto S."/>
        </authorList>
    </citation>
    <scope>NUCLEOTIDE SEQUENCE [LARGE SCALE GENOMIC DNA]</scope>
    <source>
        <strain>ATCC 29328 / DSM 20472 / WAL 2508</strain>
    </source>
</reference>
<gene>
    <name evidence="1" type="primary">trmD</name>
    <name type="ordered locus">FMG_0529</name>
</gene>
<organism>
    <name type="scientific">Finegoldia magna (strain ATCC 29328 / DSM 20472 / WAL 2508)</name>
    <name type="common">Peptostreptococcus magnus</name>
    <dbReference type="NCBI Taxonomy" id="334413"/>
    <lineage>
        <taxon>Bacteria</taxon>
        <taxon>Bacillati</taxon>
        <taxon>Bacillota</taxon>
        <taxon>Tissierellia</taxon>
        <taxon>Tissierellales</taxon>
        <taxon>Peptoniphilaceae</taxon>
        <taxon>Finegoldia</taxon>
    </lineage>
</organism>
<keyword id="KW-0963">Cytoplasm</keyword>
<keyword id="KW-0489">Methyltransferase</keyword>
<keyword id="KW-1185">Reference proteome</keyword>
<keyword id="KW-0949">S-adenosyl-L-methionine</keyword>
<keyword id="KW-0808">Transferase</keyword>
<keyword id="KW-0819">tRNA processing</keyword>